<keyword id="KW-0067">ATP-binding</keyword>
<keyword id="KW-0131">Cell cycle</keyword>
<keyword id="KW-0132">Cell division</keyword>
<keyword id="KW-0133">Cell shape</keyword>
<keyword id="KW-0961">Cell wall biogenesis/degradation</keyword>
<keyword id="KW-0963">Cytoplasm</keyword>
<keyword id="KW-0436">Ligase</keyword>
<keyword id="KW-0547">Nucleotide-binding</keyword>
<keyword id="KW-0573">Peptidoglycan synthesis</keyword>
<sequence length="443" mass="49861">MSKTYHFIGIKGSGMSALALMLHQMGHNVQGSDVDKYYFTQRGLEQAGVTILPFSPNNISEDLEIIAGNAFRPDNNEELAYVIEKGYHFKRYHEFLGDFMRQFTSLGVAGAHGKTSTTGLLAHVLKNITDTSFLIGDGTGRGSANANYFVFEADEYERHFMPYHPEYSIITNIDFDHPDYFTGLEDVFNAFNDYAKQVQKGLFIYGEDPKLHEITSEAPIYYYGFEDSNDFIAKDITRTVNGSDFKVFYNQEEIGQFHVPAYGKHNILNATAVIANLYIMGIDMALVAEHLKTFSGVKRRFTEKIIDDTVIIDDFAHHPTEIIATLDAARQKYPSKEIVAIFQPHTFTRTIALLDEFAHALSQADSVYLAQIYGSAREVDNGEVKVEDLAAKIVKHSDLVTVENVSPLLNHDNAVYVFMGAGDIQLYERSFEELLANLTKNTQ</sequence>
<proteinExistence type="inferred from homology"/>
<evidence type="ECO:0000255" key="1">
    <source>
        <dbReference type="HAMAP-Rule" id="MF_00046"/>
    </source>
</evidence>
<feature type="chain" id="PRO_0000242601" description="UDP-N-acetylmuramate--L-alanine ligase">
    <location>
        <begin position="1"/>
        <end position="443"/>
    </location>
</feature>
<feature type="binding site" evidence="1">
    <location>
        <begin position="110"/>
        <end position="116"/>
    </location>
    <ligand>
        <name>ATP</name>
        <dbReference type="ChEBI" id="CHEBI:30616"/>
    </ligand>
</feature>
<dbReference type="EC" id="6.3.2.8" evidence="1"/>
<dbReference type="EMBL" id="CP000114">
    <property type="protein sequence ID" value="ABA45089.1"/>
    <property type="molecule type" value="Genomic_DNA"/>
</dbReference>
<dbReference type="RefSeq" id="WP_000048107.1">
    <property type="nucleotide sequence ID" value="NC_007432.1"/>
</dbReference>
<dbReference type="SMR" id="Q3JZS0"/>
<dbReference type="GeneID" id="66886461"/>
<dbReference type="KEGG" id="sak:SAK_1630"/>
<dbReference type="HOGENOM" id="CLU_028104_1_0_9"/>
<dbReference type="UniPathway" id="UPA00219"/>
<dbReference type="GO" id="GO:0005737">
    <property type="term" value="C:cytoplasm"/>
    <property type="evidence" value="ECO:0007669"/>
    <property type="project" value="UniProtKB-SubCell"/>
</dbReference>
<dbReference type="GO" id="GO:0005524">
    <property type="term" value="F:ATP binding"/>
    <property type="evidence" value="ECO:0007669"/>
    <property type="project" value="UniProtKB-UniRule"/>
</dbReference>
<dbReference type="GO" id="GO:0008763">
    <property type="term" value="F:UDP-N-acetylmuramate-L-alanine ligase activity"/>
    <property type="evidence" value="ECO:0007669"/>
    <property type="project" value="UniProtKB-UniRule"/>
</dbReference>
<dbReference type="GO" id="GO:0051301">
    <property type="term" value="P:cell division"/>
    <property type="evidence" value="ECO:0007669"/>
    <property type="project" value="UniProtKB-KW"/>
</dbReference>
<dbReference type="GO" id="GO:0071555">
    <property type="term" value="P:cell wall organization"/>
    <property type="evidence" value="ECO:0007669"/>
    <property type="project" value="UniProtKB-KW"/>
</dbReference>
<dbReference type="GO" id="GO:0009252">
    <property type="term" value="P:peptidoglycan biosynthetic process"/>
    <property type="evidence" value="ECO:0007669"/>
    <property type="project" value="UniProtKB-UniRule"/>
</dbReference>
<dbReference type="GO" id="GO:0008360">
    <property type="term" value="P:regulation of cell shape"/>
    <property type="evidence" value="ECO:0007669"/>
    <property type="project" value="UniProtKB-KW"/>
</dbReference>
<dbReference type="Gene3D" id="3.90.190.20">
    <property type="entry name" value="Mur ligase, C-terminal domain"/>
    <property type="match status" value="1"/>
</dbReference>
<dbReference type="Gene3D" id="3.40.1190.10">
    <property type="entry name" value="Mur-like, catalytic domain"/>
    <property type="match status" value="1"/>
</dbReference>
<dbReference type="Gene3D" id="3.40.50.720">
    <property type="entry name" value="NAD(P)-binding Rossmann-like Domain"/>
    <property type="match status" value="1"/>
</dbReference>
<dbReference type="HAMAP" id="MF_00046">
    <property type="entry name" value="MurC"/>
    <property type="match status" value="1"/>
</dbReference>
<dbReference type="InterPro" id="IPR036565">
    <property type="entry name" value="Mur-like_cat_sf"/>
</dbReference>
<dbReference type="InterPro" id="IPR004101">
    <property type="entry name" value="Mur_ligase_C"/>
</dbReference>
<dbReference type="InterPro" id="IPR036615">
    <property type="entry name" value="Mur_ligase_C_dom_sf"/>
</dbReference>
<dbReference type="InterPro" id="IPR013221">
    <property type="entry name" value="Mur_ligase_cen"/>
</dbReference>
<dbReference type="InterPro" id="IPR000713">
    <property type="entry name" value="Mur_ligase_N"/>
</dbReference>
<dbReference type="InterPro" id="IPR050061">
    <property type="entry name" value="MurCDEF_pg_biosynth"/>
</dbReference>
<dbReference type="InterPro" id="IPR005758">
    <property type="entry name" value="UDP-N-AcMur_Ala_ligase_MurC"/>
</dbReference>
<dbReference type="NCBIfam" id="TIGR01082">
    <property type="entry name" value="murC"/>
    <property type="match status" value="1"/>
</dbReference>
<dbReference type="PANTHER" id="PTHR43445:SF3">
    <property type="entry name" value="UDP-N-ACETYLMURAMATE--L-ALANINE LIGASE"/>
    <property type="match status" value="1"/>
</dbReference>
<dbReference type="PANTHER" id="PTHR43445">
    <property type="entry name" value="UDP-N-ACETYLMURAMATE--L-ALANINE LIGASE-RELATED"/>
    <property type="match status" value="1"/>
</dbReference>
<dbReference type="Pfam" id="PF01225">
    <property type="entry name" value="Mur_ligase"/>
    <property type="match status" value="1"/>
</dbReference>
<dbReference type="Pfam" id="PF02875">
    <property type="entry name" value="Mur_ligase_C"/>
    <property type="match status" value="1"/>
</dbReference>
<dbReference type="Pfam" id="PF08245">
    <property type="entry name" value="Mur_ligase_M"/>
    <property type="match status" value="1"/>
</dbReference>
<dbReference type="SUPFAM" id="SSF51984">
    <property type="entry name" value="MurCD N-terminal domain"/>
    <property type="match status" value="1"/>
</dbReference>
<dbReference type="SUPFAM" id="SSF53623">
    <property type="entry name" value="MurD-like peptide ligases, catalytic domain"/>
    <property type="match status" value="1"/>
</dbReference>
<dbReference type="SUPFAM" id="SSF53244">
    <property type="entry name" value="MurD-like peptide ligases, peptide-binding domain"/>
    <property type="match status" value="1"/>
</dbReference>
<organism>
    <name type="scientific">Streptococcus agalactiae serotype Ia (strain ATCC 27591 / A909 / CDC SS700)</name>
    <dbReference type="NCBI Taxonomy" id="205921"/>
    <lineage>
        <taxon>Bacteria</taxon>
        <taxon>Bacillati</taxon>
        <taxon>Bacillota</taxon>
        <taxon>Bacilli</taxon>
        <taxon>Lactobacillales</taxon>
        <taxon>Streptococcaceae</taxon>
        <taxon>Streptococcus</taxon>
    </lineage>
</organism>
<accession>Q3JZS0</accession>
<name>MURC_STRA1</name>
<comment type="function">
    <text evidence="1">Cell wall formation.</text>
</comment>
<comment type="catalytic activity">
    <reaction evidence="1">
        <text>UDP-N-acetyl-alpha-D-muramate + L-alanine + ATP = UDP-N-acetyl-alpha-D-muramoyl-L-alanine + ADP + phosphate + H(+)</text>
        <dbReference type="Rhea" id="RHEA:23372"/>
        <dbReference type="ChEBI" id="CHEBI:15378"/>
        <dbReference type="ChEBI" id="CHEBI:30616"/>
        <dbReference type="ChEBI" id="CHEBI:43474"/>
        <dbReference type="ChEBI" id="CHEBI:57972"/>
        <dbReference type="ChEBI" id="CHEBI:70757"/>
        <dbReference type="ChEBI" id="CHEBI:83898"/>
        <dbReference type="ChEBI" id="CHEBI:456216"/>
        <dbReference type="EC" id="6.3.2.8"/>
    </reaction>
</comment>
<comment type="pathway">
    <text evidence="1">Cell wall biogenesis; peptidoglycan biosynthesis.</text>
</comment>
<comment type="subcellular location">
    <subcellularLocation>
        <location evidence="1">Cytoplasm</location>
    </subcellularLocation>
</comment>
<comment type="similarity">
    <text evidence="1">Belongs to the MurCDEF family.</text>
</comment>
<protein>
    <recommendedName>
        <fullName evidence="1">UDP-N-acetylmuramate--L-alanine ligase</fullName>
        <ecNumber evidence="1">6.3.2.8</ecNumber>
    </recommendedName>
    <alternativeName>
        <fullName evidence="1">UDP-N-acetylmuramoyl-L-alanine synthetase</fullName>
    </alternativeName>
</protein>
<gene>
    <name evidence="1" type="primary">murC</name>
    <name type="ordered locus">SAK_1630</name>
</gene>
<reference key="1">
    <citation type="journal article" date="2005" name="Proc. Natl. Acad. Sci. U.S.A.">
        <title>Genome analysis of multiple pathogenic isolates of Streptococcus agalactiae: implications for the microbial 'pan-genome'.</title>
        <authorList>
            <person name="Tettelin H."/>
            <person name="Masignani V."/>
            <person name="Cieslewicz M.J."/>
            <person name="Donati C."/>
            <person name="Medini D."/>
            <person name="Ward N.L."/>
            <person name="Angiuoli S.V."/>
            <person name="Crabtree J."/>
            <person name="Jones A.L."/>
            <person name="Durkin A.S."/>
            <person name="DeBoy R.T."/>
            <person name="Davidsen T.M."/>
            <person name="Mora M."/>
            <person name="Scarselli M."/>
            <person name="Margarit y Ros I."/>
            <person name="Peterson J.D."/>
            <person name="Hauser C.R."/>
            <person name="Sundaram J.P."/>
            <person name="Nelson W.C."/>
            <person name="Madupu R."/>
            <person name="Brinkac L.M."/>
            <person name="Dodson R.J."/>
            <person name="Rosovitz M.J."/>
            <person name="Sullivan S.A."/>
            <person name="Daugherty S.C."/>
            <person name="Haft D.H."/>
            <person name="Selengut J."/>
            <person name="Gwinn M.L."/>
            <person name="Zhou L."/>
            <person name="Zafar N."/>
            <person name="Khouri H."/>
            <person name="Radune D."/>
            <person name="Dimitrov G."/>
            <person name="Watkins K."/>
            <person name="O'Connor K.J."/>
            <person name="Smith S."/>
            <person name="Utterback T.R."/>
            <person name="White O."/>
            <person name="Rubens C.E."/>
            <person name="Grandi G."/>
            <person name="Madoff L.C."/>
            <person name="Kasper D.L."/>
            <person name="Telford J.L."/>
            <person name="Wessels M.R."/>
            <person name="Rappuoli R."/>
            <person name="Fraser C.M."/>
        </authorList>
    </citation>
    <scope>NUCLEOTIDE SEQUENCE [LARGE SCALE GENOMIC DNA]</scope>
    <source>
        <strain>ATCC 27591 / A909 / CDC SS700</strain>
    </source>
</reference>